<proteinExistence type="inferred from homology"/>
<name>HTPX_LACPL</name>
<gene>
    <name evidence="1" type="primary">htpX</name>
    <name type="ordered locus">lp_0516</name>
</gene>
<dbReference type="EC" id="3.4.24.-" evidence="1"/>
<dbReference type="EMBL" id="AL935263">
    <property type="protein sequence ID" value="CCC78008.1"/>
    <property type="molecule type" value="Genomic_DNA"/>
</dbReference>
<dbReference type="RefSeq" id="WP_011101040.1">
    <property type="nucleotide sequence ID" value="NC_004567.2"/>
</dbReference>
<dbReference type="RefSeq" id="YP_004888522.1">
    <property type="nucleotide sequence ID" value="NC_004567.2"/>
</dbReference>
<dbReference type="STRING" id="220668.lp_0516"/>
<dbReference type="EnsemblBacteria" id="CCC78008">
    <property type="protein sequence ID" value="CCC78008"/>
    <property type="gene ID" value="lp_0516"/>
</dbReference>
<dbReference type="GeneID" id="77217124"/>
<dbReference type="KEGG" id="lpl:lp_0516"/>
<dbReference type="PATRIC" id="fig|220668.9.peg.425"/>
<dbReference type="eggNOG" id="COG0501">
    <property type="taxonomic scope" value="Bacteria"/>
</dbReference>
<dbReference type="HOGENOM" id="CLU_042266_2_1_9"/>
<dbReference type="OrthoDB" id="15218at2"/>
<dbReference type="PhylomeDB" id="Q88Z48"/>
<dbReference type="Proteomes" id="UP000000432">
    <property type="component" value="Chromosome"/>
</dbReference>
<dbReference type="GO" id="GO:0005886">
    <property type="term" value="C:plasma membrane"/>
    <property type="evidence" value="ECO:0007669"/>
    <property type="project" value="UniProtKB-SubCell"/>
</dbReference>
<dbReference type="GO" id="GO:0004222">
    <property type="term" value="F:metalloendopeptidase activity"/>
    <property type="evidence" value="ECO:0007669"/>
    <property type="project" value="UniProtKB-UniRule"/>
</dbReference>
<dbReference type="GO" id="GO:0008270">
    <property type="term" value="F:zinc ion binding"/>
    <property type="evidence" value="ECO:0007669"/>
    <property type="project" value="UniProtKB-UniRule"/>
</dbReference>
<dbReference type="GO" id="GO:0006508">
    <property type="term" value="P:proteolysis"/>
    <property type="evidence" value="ECO:0007669"/>
    <property type="project" value="UniProtKB-KW"/>
</dbReference>
<dbReference type="CDD" id="cd07340">
    <property type="entry name" value="M48B_Htpx_like"/>
    <property type="match status" value="1"/>
</dbReference>
<dbReference type="Gene3D" id="3.30.2010.10">
    <property type="entry name" value="Metalloproteases ('zincins'), catalytic domain"/>
    <property type="match status" value="1"/>
</dbReference>
<dbReference type="HAMAP" id="MF_00188">
    <property type="entry name" value="Pept_M48_protease_HtpX"/>
    <property type="match status" value="1"/>
</dbReference>
<dbReference type="InterPro" id="IPR050083">
    <property type="entry name" value="HtpX_protease"/>
</dbReference>
<dbReference type="InterPro" id="IPR022919">
    <property type="entry name" value="Pept_M48_protease_HtpX"/>
</dbReference>
<dbReference type="InterPro" id="IPR001915">
    <property type="entry name" value="Peptidase_M48"/>
</dbReference>
<dbReference type="NCBIfam" id="NF003425">
    <property type="entry name" value="PRK04897.1"/>
    <property type="match status" value="1"/>
</dbReference>
<dbReference type="PANTHER" id="PTHR43221">
    <property type="entry name" value="PROTEASE HTPX"/>
    <property type="match status" value="1"/>
</dbReference>
<dbReference type="PANTHER" id="PTHR43221:SF1">
    <property type="entry name" value="PROTEASE HTPX"/>
    <property type="match status" value="1"/>
</dbReference>
<dbReference type="Pfam" id="PF01435">
    <property type="entry name" value="Peptidase_M48"/>
    <property type="match status" value="1"/>
</dbReference>
<organism>
    <name type="scientific">Lactiplantibacillus plantarum (strain ATCC BAA-793 / NCIMB 8826 / WCFS1)</name>
    <name type="common">Lactobacillus plantarum</name>
    <dbReference type="NCBI Taxonomy" id="220668"/>
    <lineage>
        <taxon>Bacteria</taxon>
        <taxon>Bacillati</taxon>
        <taxon>Bacillota</taxon>
        <taxon>Bacilli</taxon>
        <taxon>Lactobacillales</taxon>
        <taxon>Lactobacillaceae</taxon>
        <taxon>Lactiplantibacillus</taxon>
    </lineage>
</organism>
<reference key="1">
    <citation type="journal article" date="2003" name="Proc. Natl. Acad. Sci. U.S.A.">
        <title>Complete genome sequence of Lactobacillus plantarum WCFS1.</title>
        <authorList>
            <person name="Kleerebezem M."/>
            <person name="Boekhorst J."/>
            <person name="van Kranenburg R."/>
            <person name="Molenaar D."/>
            <person name="Kuipers O.P."/>
            <person name="Leer R."/>
            <person name="Tarchini R."/>
            <person name="Peters S.A."/>
            <person name="Sandbrink H.M."/>
            <person name="Fiers M.W.E.J."/>
            <person name="Stiekema W."/>
            <person name="Klein Lankhorst R.M."/>
            <person name="Bron P.A."/>
            <person name="Hoffer S.M."/>
            <person name="Nierop Groot M.N."/>
            <person name="Kerkhoven R."/>
            <person name="De Vries M."/>
            <person name="Ursing B."/>
            <person name="De Vos W.M."/>
            <person name="Siezen R.J."/>
        </authorList>
    </citation>
    <scope>NUCLEOTIDE SEQUENCE [LARGE SCALE GENOMIC DNA]</scope>
    <source>
        <strain>ATCC BAA-793 / NCIMB 8826 / WCFS1</strain>
    </source>
</reference>
<reference key="2">
    <citation type="journal article" date="2012" name="J. Bacteriol.">
        <title>Complete resequencing and reannotation of the Lactobacillus plantarum WCFS1 genome.</title>
        <authorList>
            <person name="Siezen R.J."/>
            <person name="Francke C."/>
            <person name="Renckens B."/>
            <person name="Boekhorst J."/>
            <person name="Wels M."/>
            <person name="Kleerebezem M."/>
            <person name="van Hijum S.A."/>
        </authorList>
    </citation>
    <scope>NUCLEOTIDE SEQUENCE [LARGE SCALE GENOMIC DNA]</scope>
    <scope>GENOME REANNOTATION</scope>
    <source>
        <strain>ATCC BAA-793 / NCIMB 8826 / WCFS1</strain>
    </source>
</reference>
<accession>Q88Z48</accession>
<accession>F9UKZ3</accession>
<protein>
    <recommendedName>
        <fullName evidence="1">Protease HtpX homolog</fullName>
        <ecNumber evidence="1">3.4.24.-</ecNumber>
    </recommendedName>
</protein>
<feature type="chain" id="PRO_0000138870" description="Protease HtpX homolog">
    <location>
        <begin position="1"/>
        <end position="299"/>
    </location>
</feature>
<feature type="transmembrane region" description="Helical" evidence="1">
    <location>
        <begin position="16"/>
        <end position="36"/>
    </location>
</feature>
<feature type="transmembrane region" description="Helical" evidence="1">
    <location>
        <begin position="38"/>
        <end position="58"/>
    </location>
</feature>
<feature type="transmembrane region" description="Helical" evidence="1">
    <location>
        <begin position="159"/>
        <end position="179"/>
    </location>
</feature>
<feature type="transmembrane region" description="Helical" evidence="1">
    <location>
        <begin position="198"/>
        <end position="218"/>
    </location>
</feature>
<feature type="active site" evidence="1">
    <location>
        <position position="145"/>
    </location>
</feature>
<feature type="binding site" evidence="1">
    <location>
        <position position="144"/>
    </location>
    <ligand>
        <name>Zn(2+)</name>
        <dbReference type="ChEBI" id="CHEBI:29105"/>
        <note>catalytic</note>
    </ligand>
</feature>
<feature type="binding site" evidence="1">
    <location>
        <position position="148"/>
    </location>
    <ligand>
        <name>Zn(2+)</name>
        <dbReference type="ChEBI" id="CHEBI:29105"/>
        <note>catalytic</note>
    </ligand>
</feature>
<feature type="binding site" evidence="1">
    <location>
        <position position="227"/>
    </location>
    <ligand>
        <name>Zn(2+)</name>
        <dbReference type="ChEBI" id="CHEBI:29105"/>
        <note>catalytic</note>
    </ligand>
</feature>
<comment type="cofactor">
    <cofactor evidence="1">
        <name>Zn(2+)</name>
        <dbReference type="ChEBI" id="CHEBI:29105"/>
    </cofactor>
    <text evidence="1">Binds 1 zinc ion per subunit.</text>
</comment>
<comment type="subcellular location">
    <subcellularLocation>
        <location evidence="1">Cell membrane</location>
        <topology evidence="1">Multi-pass membrane protein</topology>
    </subcellularLocation>
</comment>
<comment type="similarity">
    <text evidence="1">Belongs to the peptidase M48B family.</text>
</comment>
<keyword id="KW-1003">Cell membrane</keyword>
<keyword id="KW-0378">Hydrolase</keyword>
<keyword id="KW-0472">Membrane</keyword>
<keyword id="KW-0479">Metal-binding</keyword>
<keyword id="KW-0482">Metalloprotease</keyword>
<keyword id="KW-0645">Protease</keyword>
<keyword id="KW-1185">Reference proteome</keyword>
<keyword id="KW-0812">Transmembrane</keyword>
<keyword id="KW-1133">Transmembrane helix</keyword>
<keyword id="KW-0862">Zinc</keyword>
<sequence length="299" mass="32948">MLFEQIARNKRHTLYVMAAFVILLAVIGLAVGYVFFNSAIAGLLVALIAAVFYMVLMISQSTDIVMSMNHGRELHQADDDPELWHIVEDMALVAKVPMPRVFIIDDESPNAFATGNDPEHAAVAVTTGIQARLTREEMEGVIGHEMSHVRNYDIRLQTIALALTAAISLLVNWGMNAFWWGGGRRSRDNDRDGNGAQVLLMILAIVVIILAPLAASLVQMALSRNREYLADAGSVELTRNPLGLISALEKIDDSQPMQAADPSSAALYISDPFKAKKSWTHLFDTHPPMADRITRLKNM</sequence>
<evidence type="ECO:0000255" key="1">
    <source>
        <dbReference type="HAMAP-Rule" id="MF_00188"/>
    </source>
</evidence>